<evidence type="ECO:0000255" key="1">
    <source>
        <dbReference type="HAMAP-Rule" id="MF_00402"/>
    </source>
</evidence>
<evidence type="ECO:0000256" key="2">
    <source>
        <dbReference type="SAM" id="MobiDB-lite"/>
    </source>
</evidence>
<evidence type="ECO:0000305" key="3"/>
<proteinExistence type="inferred from homology"/>
<name>RL19_CAUVC</name>
<accession>P58167</accession>
<reference key="1">
    <citation type="journal article" date="2001" name="Proc. Natl. Acad. Sci. U.S.A.">
        <title>Complete genome sequence of Caulobacter crescentus.</title>
        <authorList>
            <person name="Nierman W.C."/>
            <person name="Feldblyum T.V."/>
            <person name="Laub M.T."/>
            <person name="Paulsen I.T."/>
            <person name="Nelson K.E."/>
            <person name="Eisen J.A."/>
            <person name="Heidelberg J.F."/>
            <person name="Alley M.R.K."/>
            <person name="Ohta N."/>
            <person name="Maddock J.R."/>
            <person name="Potocka I."/>
            <person name="Nelson W.C."/>
            <person name="Newton A."/>
            <person name="Stephens C."/>
            <person name="Phadke N.D."/>
            <person name="Ely B."/>
            <person name="DeBoy R.T."/>
            <person name="Dodson R.J."/>
            <person name="Durkin A.S."/>
            <person name="Gwinn M.L."/>
            <person name="Haft D.H."/>
            <person name="Kolonay J.F."/>
            <person name="Smit J."/>
            <person name="Craven M.B."/>
            <person name="Khouri H.M."/>
            <person name="Shetty J."/>
            <person name="Berry K.J."/>
            <person name="Utterback T.R."/>
            <person name="Tran K."/>
            <person name="Wolf A.M."/>
            <person name="Vamathevan J.J."/>
            <person name="Ermolaeva M.D."/>
            <person name="White O."/>
            <person name="Salzberg S.L."/>
            <person name="Venter J.C."/>
            <person name="Shapiro L."/>
            <person name="Fraser C.M."/>
        </authorList>
    </citation>
    <scope>NUCLEOTIDE SEQUENCE [LARGE SCALE GENOMIC DNA]</scope>
    <source>
        <strain>ATCC 19089 / CIP 103742 / CB 15</strain>
    </source>
</reference>
<keyword id="KW-1185">Reference proteome</keyword>
<keyword id="KW-0687">Ribonucleoprotein</keyword>
<keyword id="KW-0689">Ribosomal protein</keyword>
<protein>
    <recommendedName>
        <fullName evidence="1">Large ribosomal subunit protein bL19</fullName>
    </recommendedName>
    <alternativeName>
        <fullName evidence="3">50S ribosomal protein L19</fullName>
    </alternativeName>
</protein>
<dbReference type="EMBL" id="AE005673">
    <property type="protein sequence ID" value="AAK22184.1"/>
    <property type="molecule type" value="Genomic_DNA"/>
</dbReference>
<dbReference type="PIR" id="D87273">
    <property type="entry name" value="D87273"/>
</dbReference>
<dbReference type="RefSeq" id="NP_419016.1">
    <property type="nucleotide sequence ID" value="NC_002696.2"/>
</dbReference>
<dbReference type="RefSeq" id="WP_010918086.1">
    <property type="nucleotide sequence ID" value="NC_002696.2"/>
</dbReference>
<dbReference type="SMR" id="P58167"/>
<dbReference type="STRING" id="190650.CC_0197"/>
<dbReference type="EnsemblBacteria" id="AAK22184">
    <property type="protein sequence ID" value="AAK22184"/>
    <property type="gene ID" value="CC_0197"/>
</dbReference>
<dbReference type="KEGG" id="ccr:CC_0197"/>
<dbReference type="PATRIC" id="fig|190650.5.peg.194"/>
<dbReference type="eggNOG" id="COG0335">
    <property type="taxonomic scope" value="Bacteria"/>
</dbReference>
<dbReference type="HOGENOM" id="CLU_103507_2_1_5"/>
<dbReference type="BioCyc" id="CAULO:CC0197-MONOMER"/>
<dbReference type="Proteomes" id="UP000001816">
    <property type="component" value="Chromosome"/>
</dbReference>
<dbReference type="GO" id="GO:0022625">
    <property type="term" value="C:cytosolic large ribosomal subunit"/>
    <property type="evidence" value="ECO:0007669"/>
    <property type="project" value="TreeGrafter"/>
</dbReference>
<dbReference type="GO" id="GO:0003735">
    <property type="term" value="F:structural constituent of ribosome"/>
    <property type="evidence" value="ECO:0007669"/>
    <property type="project" value="InterPro"/>
</dbReference>
<dbReference type="GO" id="GO:0006412">
    <property type="term" value="P:translation"/>
    <property type="evidence" value="ECO:0007669"/>
    <property type="project" value="UniProtKB-UniRule"/>
</dbReference>
<dbReference type="FunFam" id="2.30.30.790:FF:000001">
    <property type="entry name" value="50S ribosomal protein L19"/>
    <property type="match status" value="1"/>
</dbReference>
<dbReference type="Gene3D" id="2.30.30.790">
    <property type="match status" value="1"/>
</dbReference>
<dbReference type="HAMAP" id="MF_00402">
    <property type="entry name" value="Ribosomal_bL19"/>
    <property type="match status" value="1"/>
</dbReference>
<dbReference type="InterPro" id="IPR001857">
    <property type="entry name" value="Ribosomal_bL19"/>
</dbReference>
<dbReference type="InterPro" id="IPR018257">
    <property type="entry name" value="Ribosomal_bL19_CS"/>
</dbReference>
<dbReference type="InterPro" id="IPR038657">
    <property type="entry name" value="Ribosomal_bL19_sf"/>
</dbReference>
<dbReference type="InterPro" id="IPR008991">
    <property type="entry name" value="Translation_prot_SH3-like_sf"/>
</dbReference>
<dbReference type="NCBIfam" id="TIGR01024">
    <property type="entry name" value="rplS_bact"/>
    <property type="match status" value="1"/>
</dbReference>
<dbReference type="PANTHER" id="PTHR15680:SF9">
    <property type="entry name" value="LARGE RIBOSOMAL SUBUNIT PROTEIN BL19M"/>
    <property type="match status" value="1"/>
</dbReference>
<dbReference type="PANTHER" id="PTHR15680">
    <property type="entry name" value="RIBOSOMAL PROTEIN L19"/>
    <property type="match status" value="1"/>
</dbReference>
<dbReference type="Pfam" id="PF01245">
    <property type="entry name" value="Ribosomal_L19"/>
    <property type="match status" value="1"/>
</dbReference>
<dbReference type="PIRSF" id="PIRSF002191">
    <property type="entry name" value="Ribosomal_L19"/>
    <property type="match status" value="1"/>
</dbReference>
<dbReference type="PRINTS" id="PR00061">
    <property type="entry name" value="RIBOSOMALL19"/>
</dbReference>
<dbReference type="SUPFAM" id="SSF50104">
    <property type="entry name" value="Translation proteins SH3-like domain"/>
    <property type="match status" value="1"/>
</dbReference>
<dbReference type="PROSITE" id="PS01015">
    <property type="entry name" value="RIBOSOMAL_L19"/>
    <property type="match status" value="1"/>
</dbReference>
<feature type="chain" id="PRO_0000163434" description="Large ribosomal subunit protein bL19">
    <location>
        <begin position="1"/>
        <end position="131"/>
    </location>
</feature>
<feature type="region of interest" description="Disordered" evidence="2">
    <location>
        <begin position="112"/>
        <end position="131"/>
    </location>
</feature>
<organism>
    <name type="scientific">Caulobacter vibrioides (strain ATCC 19089 / CIP 103742 / CB 15)</name>
    <name type="common">Caulobacter crescentus</name>
    <dbReference type="NCBI Taxonomy" id="190650"/>
    <lineage>
        <taxon>Bacteria</taxon>
        <taxon>Pseudomonadati</taxon>
        <taxon>Pseudomonadota</taxon>
        <taxon>Alphaproteobacteria</taxon>
        <taxon>Caulobacterales</taxon>
        <taxon>Caulobacteraceae</taxon>
        <taxon>Caulobacter</taxon>
    </lineage>
</organism>
<gene>
    <name evidence="1" type="primary">rplS</name>
    <name type="ordered locus">CC_0197</name>
</gene>
<sequence length="131" mass="14522">MAINIIAQLEQEESARLLAARAIPDFRPGDTLRVNVKIKEGERERVQAYEGVCIARAGTGVHESFTVRKISFGEGVERLFPLLSPSIESIEVKRRGVVRRAKLYYLRDRRGKSARIAERAGGPKASASTEA</sequence>
<comment type="function">
    <text evidence="1">This protein is located at the 30S-50S ribosomal subunit interface and may play a role in the structure and function of the aminoacyl-tRNA binding site.</text>
</comment>
<comment type="similarity">
    <text evidence="1">Belongs to the bacterial ribosomal protein bL19 family.</text>
</comment>